<accession>P68568</accession>
<accession>P37633</accession>
<accession>P76707</accession>
<sequence length="250" mass="26949">MKICLIDETGTGDGALSVLAARWGLEHDEDNLMALVLTPEHLELRKRDEPKLGGIFVDFVGGAMAHRRKFGGGRGEAVAKAVGIKGDYLPDVVDATAGLGRDAFVLASVGCRVRMLERNPVVAALLDDGLARGYADAEIGGWLQERLQLIHASSLTALTDITPRPQVVYLDPMFPHKQKSALVKKEMRVFQSLVGPDLDADGLLEPARLLATKRVVVKRPDYAPPLANVATPNAVVTKGHRFDIYAGTPV</sequence>
<reference key="1">
    <citation type="journal article" date="2001" name="Nature">
        <title>Genome sequence of enterohaemorrhagic Escherichia coli O157:H7.</title>
        <authorList>
            <person name="Perna N.T."/>
            <person name="Plunkett G. III"/>
            <person name="Burland V."/>
            <person name="Mau B."/>
            <person name="Glasner J.D."/>
            <person name="Rose D.J."/>
            <person name="Mayhew G.F."/>
            <person name="Evans P.S."/>
            <person name="Gregor J."/>
            <person name="Kirkpatrick H.A."/>
            <person name="Posfai G."/>
            <person name="Hackett J."/>
            <person name="Klink S."/>
            <person name="Boutin A."/>
            <person name="Shao Y."/>
            <person name="Miller L."/>
            <person name="Grotbeck E.J."/>
            <person name="Davis N.W."/>
            <person name="Lim A."/>
            <person name="Dimalanta E.T."/>
            <person name="Potamousis K."/>
            <person name="Apodaca J."/>
            <person name="Anantharaman T.S."/>
            <person name="Lin J."/>
            <person name="Yen G."/>
            <person name="Schwartz D.C."/>
            <person name="Welch R.A."/>
            <person name="Blattner F.R."/>
        </authorList>
    </citation>
    <scope>NUCLEOTIDE SEQUENCE [LARGE SCALE GENOMIC DNA]</scope>
    <source>
        <strain>O157:H7 / EDL933 / ATCC 700927 / EHEC</strain>
    </source>
</reference>
<reference key="2">
    <citation type="journal article" date="2001" name="DNA Res.">
        <title>Complete genome sequence of enterohemorrhagic Escherichia coli O157:H7 and genomic comparison with a laboratory strain K-12.</title>
        <authorList>
            <person name="Hayashi T."/>
            <person name="Makino K."/>
            <person name="Ohnishi M."/>
            <person name="Kurokawa K."/>
            <person name="Ishii K."/>
            <person name="Yokoyama K."/>
            <person name="Han C.-G."/>
            <person name="Ohtsubo E."/>
            <person name="Nakayama K."/>
            <person name="Murata T."/>
            <person name="Tanaka M."/>
            <person name="Tobe T."/>
            <person name="Iida T."/>
            <person name="Takami H."/>
            <person name="Honda T."/>
            <person name="Sasakawa C."/>
            <person name="Ogasawara N."/>
            <person name="Yasunaga T."/>
            <person name="Kuhara S."/>
            <person name="Shiba T."/>
            <person name="Hattori M."/>
            <person name="Shinagawa H."/>
        </authorList>
    </citation>
    <scope>NUCLEOTIDE SEQUENCE [LARGE SCALE GENOMIC DNA]</scope>
    <source>
        <strain>O157:H7 / Sakai / RIMD 0509952 / EHEC</strain>
    </source>
</reference>
<reference key="3">
    <citation type="submission" date="2009-02" db="PDB data bank">
        <title>Crystal structure of UPF0341 protein YhiQ from Escherichia coli.</title>
        <authorList>
            <consortium name="Northeast structural genomics consortium (NESG)"/>
        </authorList>
    </citation>
    <scope>X-RAY CRYSTALLOGRAPHY (2.0 ANGSTROMS)</scope>
    <source>
        <strain>O157:H7 / EDL933 / ATCC 700927 / EHEC</strain>
    </source>
</reference>
<evidence type="ECO:0000255" key="1">
    <source>
        <dbReference type="HAMAP-Rule" id="MF_01523"/>
    </source>
</evidence>
<evidence type="ECO:0007829" key="2">
    <source>
        <dbReference type="PDB" id="2PGX"/>
    </source>
</evidence>
<gene>
    <name evidence="1" type="primary">rsmJ</name>
    <name type="synonym">yhiQ</name>
    <name type="ordered locus">Z4897</name>
    <name type="ordered locus">ECs4369</name>
</gene>
<dbReference type="EC" id="2.1.1.242" evidence="1"/>
<dbReference type="EMBL" id="AE005174">
    <property type="protein sequence ID" value="AAG58629.1"/>
    <property type="molecule type" value="Genomic_DNA"/>
</dbReference>
<dbReference type="EMBL" id="BA000007">
    <property type="protein sequence ID" value="BAB37792.1"/>
    <property type="molecule type" value="Genomic_DNA"/>
</dbReference>
<dbReference type="PIR" id="A86021">
    <property type="entry name" value="A86021"/>
</dbReference>
<dbReference type="PIR" id="A98175">
    <property type="entry name" value="A98175"/>
</dbReference>
<dbReference type="RefSeq" id="NP_312396.1">
    <property type="nucleotide sequence ID" value="NC_002695.1"/>
</dbReference>
<dbReference type="RefSeq" id="WP_000686620.1">
    <property type="nucleotide sequence ID" value="NZ_VOAI01000004.1"/>
</dbReference>
<dbReference type="PDB" id="2PGX">
    <property type="method" value="X-ray"/>
    <property type="resolution" value="2.00 A"/>
    <property type="chains" value="A=1-250"/>
</dbReference>
<dbReference type="PDBsum" id="2PGX"/>
<dbReference type="SMR" id="P68568"/>
<dbReference type="STRING" id="155864.Z4897"/>
<dbReference type="GeneID" id="915773"/>
<dbReference type="KEGG" id="ece:Z4897"/>
<dbReference type="KEGG" id="ecs:ECs_4369"/>
<dbReference type="PATRIC" id="fig|386585.9.peg.4563"/>
<dbReference type="eggNOG" id="COG0742">
    <property type="taxonomic scope" value="Bacteria"/>
</dbReference>
<dbReference type="HOGENOM" id="CLU_076324_0_0_6"/>
<dbReference type="OMA" id="YDIYPKK"/>
<dbReference type="BRENDA" id="2.1.1.242">
    <property type="organism ID" value="2026"/>
</dbReference>
<dbReference type="EvolutionaryTrace" id="P68568"/>
<dbReference type="Proteomes" id="UP000000558">
    <property type="component" value="Chromosome"/>
</dbReference>
<dbReference type="Proteomes" id="UP000002519">
    <property type="component" value="Chromosome"/>
</dbReference>
<dbReference type="GO" id="GO:0005737">
    <property type="term" value="C:cytoplasm"/>
    <property type="evidence" value="ECO:0007669"/>
    <property type="project" value="UniProtKB-SubCell"/>
</dbReference>
<dbReference type="GO" id="GO:0008990">
    <property type="term" value="F:rRNA (guanine-N2-)-methyltransferase activity"/>
    <property type="evidence" value="ECO:0007669"/>
    <property type="project" value="UniProtKB-UniRule"/>
</dbReference>
<dbReference type="CDD" id="cd02440">
    <property type="entry name" value="AdoMet_MTases"/>
    <property type="match status" value="1"/>
</dbReference>
<dbReference type="FunFam" id="3.40.1630.10:FF:000001">
    <property type="entry name" value="Ribosomal RNA small subunit methyltransferase J"/>
    <property type="match status" value="1"/>
</dbReference>
<dbReference type="FunFam" id="3.40.50.150:FF:000072">
    <property type="entry name" value="Ribosomal RNA small subunit methyltransferase J"/>
    <property type="match status" value="1"/>
</dbReference>
<dbReference type="Gene3D" id="3.40.50.150">
    <property type="entry name" value="Vaccinia Virus protein VP39"/>
    <property type="match status" value="1"/>
</dbReference>
<dbReference type="Gene3D" id="3.40.1630.10">
    <property type="entry name" value="YhiQ-like domain"/>
    <property type="match status" value="1"/>
</dbReference>
<dbReference type="HAMAP" id="MF_01523">
    <property type="entry name" value="16SrRNA_methyltr_J"/>
    <property type="match status" value="1"/>
</dbReference>
<dbReference type="InterPro" id="IPR007536">
    <property type="entry name" value="16SrRNA_methylTrfase_J"/>
</dbReference>
<dbReference type="InterPro" id="IPR029063">
    <property type="entry name" value="SAM-dependent_MTases_sf"/>
</dbReference>
<dbReference type="NCBIfam" id="NF008012">
    <property type="entry name" value="PRK10742.1"/>
    <property type="match status" value="1"/>
</dbReference>
<dbReference type="PANTHER" id="PTHR36112">
    <property type="entry name" value="RIBOSOMAL RNA SMALL SUBUNIT METHYLTRANSFERASE J"/>
    <property type="match status" value="1"/>
</dbReference>
<dbReference type="PANTHER" id="PTHR36112:SF1">
    <property type="entry name" value="RIBOSOMAL RNA SMALL SUBUNIT METHYLTRANSFERASE J"/>
    <property type="match status" value="1"/>
</dbReference>
<dbReference type="Pfam" id="PF04445">
    <property type="entry name" value="SAM_MT"/>
    <property type="match status" value="1"/>
</dbReference>
<dbReference type="SUPFAM" id="SSF53335">
    <property type="entry name" value="S-adenosyl-L-methionine-dependent methyltransferases"/>
    <property type="match status" value="1"/>
</dbReference>
<name>RSMJ_ECO57</name>
<keyword id="KW-0002">3D-structure</keyword>
<keyword id="KW-0963">Cytoplasm</keyword>
<keyword id="KW-0489">Methyltransferase</keyword>
<keyword id="KW-1185">Reference proteome</keyword>
<keyword id="KW-0698">rRNA processing</keyword>
<keyword id="KW-0949">S-adenosyl-L-methionine</keyword>
<keyword id="KW-0808">Transferase</keyword>
<comment type="function">
    <text evidence="1">Specifically methylates the guanosine in position 1516 of 16S rRNA.</text>
</comment>
<comment type="catalytic activity">
    <reaction evidence="1">
        <text>guanosine(1516) in 16S rRNA + S-adenosyl-L-methionine = N(2)-methylguanosine(1516) in 16S rRNA + S-adenosyl-L-homocysteine + H(+)</text>
        <dbReference type="Rhea" id="RHEA:43220"/>
        <dbReference type="Rhea" id="RHEA-COMP:10412"/>
        <dbReference type="Rhea" id="RHEA-COMP:10413"/>
        <dbReference type="ChEBI" id="CHEBI:15378"/>
        <dbReference type="ChEBI" id="CHEBI:57856"/>
        <dbReference type="ChEBI" id="CHEBI:59789"/>
        <dbReference type="ChEBI" id="CHEBI:74269"/>
        <dbReference type="ChEBI" id="CHEBI:74481"/>
        <dbReference type="EC" id="2.1.1.242"/>
    </reaction>
</comment>
<comment type="subcellular location">
    <subcellularLocation>
        <location evidence="1">Cytoplasm</location>
    </subcellularLocation>
</comment>
<comment type="similarity">
    <text evidence="1">Belongs to the methyltransferase superfamily. RsmJ family.</text>
</comment>
<feature type="chain" id="PRO_0000212065" description="Ribosomal RNA small subunit methyltransferase J">
    <location>
        <begin position="1"/>
        <end position="250"/>
    </location>
</feature>
<feature type="binding site" evidence="1">
    <location>
        <begin position="101"/>
        <end position="102"/>
    </location>
    <ligand>
        <name>S-adenosyl-L-methionine</name>
        <dbReference type="ChEBI" id="CHEBI:59789"/>
    </ligand>
</feature>
<feature type="binding site" evidence="1">
    <location>
        <begin position="117"/>
        <end position="118"/>
    </location>
    <ligand>
        <name>S-adenosyl-L-methionine</name>
        <dbReference type="ChEBI" id="CHEBI:59789"/>
    </ligand>
</feature>
<feature type="binding site" evidence="1">
    <location>
        <begin position="153"/>
        <end position="154"/>
    </location>
    <ligand>
        <name>S-adenosyl-L-methionine</name>
        <dbReference type="ChEBI" id="CHEBI:59789"/>
    </ligand>
</feature>
<feature type="binding site" evidence="1">
    <location>
        <position position="171"/>
    </location>
    <ligand>
        <name>S-adenosyl-L-methionine</name>
        <dbReference type="ChEBI" id="CHEBI:59789"/>
    </ligand>
</feature>
<feature type="strand" evidence="2">
    <location>
        <begin position="2"/>
        <end position="7"/>
    </location>
</feature>
<feature type="helix" evidence="2">
    <location>
        <begin position="15"/>
        <end position="22"/>
    </location>
</feature>
<feature type="strand" evidence="2">
    <location>
        <begin position="32"/>
        <end position="37"/>
    </location>
</feature>
<feature type="strand" evidence="2">
    <location>
        <begin position="42"/>
        <end position="46"/>
    </location>
</feature>
<feature type="helix" evidence="2">
    <location>
        <begin position="50"/>
        <end position="52"/>
    </location>
</feature>
<feature type="strand" evidence="2">
    <location>
        <begin position="59"/>
        <end position="61"/>
    </location>
</feature>
<feature type="helix" evidence="2">
    <location>
        <begin position="62"/>
        <end position="70"/>
    </location>
</feature>
<feature type="helix" evidence="2">
    <location>
        <begin position="73"/>
        <end position="75"/>
    </location>
</feature>
<feature type="helix" evidence="2">
    <location>
        <begin position="77"/>
        <end position="81"/>
    </location>
</feature>
<feature type="strand" evidence="2">
    <location>
        <begin position="92"/>
        <end position="94"/>
    </location>
</feature>
<feature type="helix" evidence="2">
    <location>
        <begin position="101"/>
        <end position="109"/>
    </location>
</feature>
<feature type="strand" evidence="2">
    <location>
        <begin position="113"/>
        <end position="116"/>
    </location>
</feature>
<feature type="helix" evidence="2">
    <location>
        <begin position="120"/>
        <end position="134"/>
    </location>
</feature>
<feature type="turn" evidence="2">
    <location>
        <begin position="137"/>
        <end position="139"/>
    </location>
</feature>
<feature type="helix" evidence="2">
    <location>
        <begin position="140"/>
        <end position="146"/>
    </location>
</feature>
<feature type="strand" evidence="2">
    <location>
        <begin position="147"/>
        <end position="150"/>
    </location>
</feature>
<feature type="turn" evidence="2">
    <location>
        <begin position="154"/>
        <end position="156"/>
    </location>
</feature>
<feature type="helix" evidence="2">
    <location>
        <begin position="157"/>
        <end position="160"/>
    </location>
</feature>
<feature type="strand" evidence="2">
    <location>
        <begin position="166"/>
        <end position="170"/>
    </location>
</feature>
<feature type="helix" evidence="2">
    <location>
        <begin position="185"/>
        <end position="193"/>
    </location>
</feature>
<feature type="helix" evidence="2">
    <location>
        <begin position="200"/>
        <end position="203"/>
    </location>
</feature>
<feature type="helix" evidence="2">
    <location>
        <begin position="204"/>
        <end position="210"/>
    </location>
</feature>
<feature type="strand" evidence="2">
    <location>
        <begin position="212"/>
        <end position="220"/>
    </location>
</feature>
<feature type="helix" evidence="2">
    <location>
        <begin position="226"/>
        <end position="228"/>
    </location>
</feature>
<feature type="strand" evidence="2">
    <location>
        <begin position="234"/>
        <end position="236"/>
    </location>
</feature>
<feature type="strand" evidence="2">
    <location>
        <begin position="238"/>
        <end position="246"/>
    </location>
</feature>
<proteinExistence type="evidence at protein level"/>
<protein>
    <recommendedName>
        <fullName evidence="1">Ribosomal RNA small subunit methyltransferase J</fullName>
        <ecNumber evidence="1">2.1.1.242</ecNumber>
    </recommendedName>
    <alternativeName>
        <fullName evidence="1">16S rRNA m2G1516 methyltransferase</fullName>
    </alternativeName>
    <alternativeName>
        <fullName evidence="1">rRNA (guanine-N(2)-)-methyltransferase</fullName>
    </alternativeName>
</protein>
<organism>
    <name type="scientific">Escherichia coli O157:H7</name>
    <dbReference type="NCBI Taxonomy" id="83334"/>
    <lineage>
        <taxon>Bacteria</taxon>
        <taxon>Pseudomonadati</taxon>
        <taxon>Pseudomonadota</taxon>
        <taxon>Gammaproteobacteria</taxon>
        <taxon>Enterobacterales</taxon>
        <taxon>Enterobacteriaceae</taxon>
        <taxon>Escherichia</taxon>
    </lineage>
</organism>